<comment type="function">
    <text evidence="1">Reversibly catalyzes the transfer of the carbamoyl group from carbamoyl phosphate (CP) to the N(epsilon) atom of ornithine (ORN) to produce L-citrulline.</text>
</comment>
<comment type="catalytic activity">
    <reaction>
        <text>carbamoyl phosphate + L-ornithine = L-citrulline + phosphate + H(+)</text>
        <dbReference type="Rhea" id="RHEA:19513"/>
        <dbReference type="ChEBI" id="CHEBI:15378"/>
        <dbReference type="ChEBI" id="CHEBI:43474"/>
        <dbReference type="ChEBI" id="CHEBI:46911"/>
        <dbReference type="ChEBI" id="CHEBI:57743"/>
        <dbReference type="ChEBI" id="CHEBI:58228"/>
        <dbReference type="EC" id="2.1.3.3"/>
    </reaction>
</comment>
<comment type="pathway">
    <text>Amino-acid biosynthesis; L-arginine biosynthesis; L-arginine from L-ornithine and carbamoyl phosphate: step 1/3.</text>
</comment>
<comment type="subcellular location">
    <subcellularLocation>
        <location evidence="1">Cytoplasm</location>
    </subcellularLocation>
</comment>
<comment type="similarity">
    <text evidence="2">Belongs to the aspartate/ornithine carbamoyltransferase superfamily. OTCase family.</text>
</comment>
<keyword id="KW-0028">Amino-acid biosynthesis</keyword>
<keyword id="KW-0055">Arginine biosynthesis</keyword>
<keyword id="KW-0963">Cytoplasm</keyword>
<keyword id="KW-0808">Transferase</keyword>
<proteinExistence type="inferred from homology"/>
<evidence type="ECO:0000250" key="1"/>
<evidence type="ECO:0000305" key="2"/>
<accession>O86415</accession>
<gene>
    <name type="primary">argF</name>
</gene>
<protein>
    <recommendedName>
        <fullName>Ornithine carbamoyltransferase</fullName>
        <shortName>OTCase</shortName>
        <ecNumber>2.1.3.3</ecNumber>
    </recommendedName>
</protein>
<name>OTC_NEISU</name>
<reference key="1">
    <citation type="journal article" date="1999" name="Mol. Biol. Evol.">
        <title>Networks and groups within the genus Neisseria: analysis of argF, recA, rho, and 16S rRNA sequences from human Neisseria species.</title>
        <authorList>
            <person name="Smith N.H."/>
            <person name="Holmes E.C."/>
            <person name="Donovan G.M."/>
            <person name="Carpenter G.A."/>
            <person name="Spratt B.G."/>
        </authorList>
    </citation>
    <scope>NUCLEOTIDE SEQUENCE [GENOMIC DNA]</scope>
    <source>
        <strain>ATCC 49275 / DSM 17610 / CCUG 23930 / CIP 103343 / NRL 30017 / 37</strain>
    </source>
</reference>
<sequence length="232" mass="25768">DQGAGVTYLEPSASQIGHKESIKDTARVLGRMFDGIEYRGFGQDVVEELAKYAGVPVFNGLTNEFHPTQMLADALTMREHSDKPLNQIAFAYVGDARYNMANSLLVLAAKLGMDVRIGAPKSLWPSENIIETVQAVAKETGGRILLTENVKEAVKGVDFIHTDVWVSMGEPKEAWQERIDLLKGYRVTPELMVAAENPQVKFMHCLPAFHNRETKVGEWIYETFGLNGVEVT</sequence>
<dbReference type="EC" id="2.1.3.3"/>
<dbReference type="EMBL" id="AJ223895">
    <property type="protein sequence ID" value="CAA11626.1"/>
    <property type="molecule type" value="Genomic_DNA"/>
</dbReference>
<dbReference type="SMR" id="O86415"/>
<dbReference type="UniPathway" id="UPA00068">
    <property type="reaction ID" value="UER00112"/>
</dbReference>
<dbReference type="GO" id="GO:0005737">
    <property type="term" value="C:cytoplasm"/>
    <property type="evidence" value="ECO:0007669"/>
    <property type="project" value="UniProtKB-SubCell"/>
</dbReference>
<dbReference type="GO" id="GO:0016597">
    <property type="term" value="F:amino acid binding"/>
    <property type="evidence" value="ECO:0007669"/>
    <property type="project" value="InterPro"/>
</dbReference>
<dbReference type="GO" id="GO:0004585">
    <property type="term" value="F:ornithine carbamoyltransferase activity"/>
    <property type="evidence" value="ECO:0007669"/>
    <property type="project" value="UniProtKB-EC"/>
</dbReference>
<dbReference type="GO" id="GO:0042450">
    <property type="term" value="P:arginine biosynthetic process via ornithine"/>
    <property type="evidence" value="ECO:0007669"/>
    <property type="project" value="TreeGrafter"/>
</dbReference>
<dbReference type="GO" id="GO:0019240">
    <property type="term" value="P:citrulline biosynthetic process"/>
    <property type="evidence" value="ECO:0007669"/>
    <property type="project" value="TreeGrafter"/>
</dbReference>
<dbReference type="GO" id="GO:0006526">
    <property type="term" value="P:L-arginine biosynthetic process"/>
    <property type="evidence" value="ECO:0007669"/>
    <property type="project" value="UniProtKB-UniPathway"/>
</dbReference>
<dbReference type="FunFam" id="3.40.50.1370:FF:000008">
    <property type="entry name" value="Ornithine carbamoyltransferase"/>
    <property type="match status" value="1"/>
</dbReference>
<dbReference type="Gene3D" id="3.40.50.1370">
    <property type="entry name" value="Aspartate/ornithine carbamoyltransferase"/>
    <property type="match status" value="2"/>
</dbReference>
<dbReference type="InterPro" id="IPR006132">
    <property type="entry name" value="Asp/Orn_carbamoyltranf_P-bd"/>
</dbReference>
<dbReference type="InterPro" id="IPR006130">
    <property type="entry name" value="Asp/Orn_carbamoylTrfase"/>
</dbReference>
<dbReference type="InterPro" id="IPR036901">
    <property type="entry name" value="Asp/Orn_carbamoylTrfase_sf"/>
</dbReference>
<dbReference type="InterPro" id="IPR006131">
    <property type="entry name" value="Asp_carbamoyltransf_Asp/Orn-bd"/>
</dbReference>
<dbReference type="InterPro" id="IPR002292">
    <property type="entry name" value="Orn/put_carbamltrans"/>
</dbReference>
<dbReference type="NCBIfam" id="TIGR00658">
    <property type="entry name" value="orni_carb_tr"/>
    <property type="match status" value="1"/>
</dbReference>
<dbReference type="PANTHER" id="PTHR45753:SF2">
    <property type="entry name" value="ORNITHINE CARBAMOYLTRANSFERASE"/>
    <property type="match status" value="1"/>
</dbReference>
<dbReference type="PANTHER" id="PTHR45753">
    <property type="entry name" value="ORNITHINE CARBAMOYLTRANSFERASE, MITOCHONDRIAL"/>
    <property type="match status" value="1"/>
</dbReference>
<dbReference type="Pfam" id="PF00185">
    <property type="entry name" value="OTCace"/>
    <property type="match status" value="1"/>
</dbReference>
<dbReference type="Pfam" id="PF02729">
    <property type="entry name" value="OTCace_N"/>
    <property type="match status" value="1"/>
</dbReference>
<dbReference type="PRINTS" id="PR00100">
    <property type="entry name" value="AOTCASE"/>
</dbReference>
<dbReference type="PRINTS" id="PR00102">
    <property type="entry name" value="OTCASE"/>
</dbReference>
<dbReference type="SUPFAM" id="SSF53671">
    <property type="entry name" value="Aspartate/ornithine carbamoyltransferase"/>
    <property type="match status" value="1"/>
</dbReference>
<feature type="chain" id="PRO_0000112972" description="Ornithine carbamoyltransferase">
    <location>
        <begin position="1" status="less than"/>
        <end position="232" status="greater than"/>
    </location>
</feature>
<feature type="binding site" evidence="1">
    <location>
        <position position="15"/>
    </location>
    <ligand>
        <name>carbamoyl phosphate</name>
        <dbReference type="ChEBI" id="CHEBI:58228"/>
    </ligand>
</feature>
<feature type="binding site" evidence="1">
    <location>
        <position position="39"/>
    </location>
    <ligand>
        <name>carbamoyl phosphate</name>
        <dbReference type="ChEBI" id="CHEBI:58228"/>
    </ligand>
</feature>
<feature type="binding site" evidence="1">
    <location>
        <begin position="66"/>
        <end position="69"/>
    </location>
    <ligand>
        <name>carbamoyl phosphate</name>
        <dbReference type="ChEBI" id="CHEBI:58228"/>
    </ligand>
</feature>
<feature type="binding site" evidence="1">
    <location>
        <position position="99"/>
    </location>
    <ligand>
        <name>L-ornithine</name>
        <dbReference type="ChEBI" id="CHEBI:46911"/>
    </ligand>
</feature>
<feature type="binding site" evidence="1">
    <location>
        <position position="163"/>
    </location>
    <ligand>
        <name>L-ornithine</name>
        <dbReference type="ChEBI" id="CHEBI:46911"/>
    </ligand>
</feature>
<feature type="binding site" evidence="1">
    <location>
        <begin position="167"/>
        <end position="168"/>
    </location>
    <ligand>
        <name>L-ornithine</name>
        <dbReference type="ChEBI" id="CHEBI:46911"/>
    </ligand>
</feature>
<feature type="binding site" evidence="1">
    <location>
        <begin position="204"/>
        <end position="207"/>
    </location>
    <ligand>
        <name>carbamoyl phosphate</name>
        <dbReference type="ChEBI" id="CHEBI:58228"/>
    </ligand>
</feature>
<feature type="binding site" evidence="1">
    <location>
        <position position="232"/>
    </location>
    <ligand>
        <name>carbamoyl phosphate</name>
        <dbReference type="ChEBI" id="CHEBI:58228"/>
    </ligand>
</feature>
<feature type="site" description="Important for structural integrity" evidence="1">
    <location>
        <position position="79"/>
    </location>
</feature>
<feature type="non-terminal residue">
    <location>
        <position position="1"/>
    </location>
</feature>
<feature type="non-terminal residue">
    <location>
        <position position="232"/>
    </location>
</feature>
<organism>
    <name type="scientific">Neisseria subflava</name>
    <dbReference type="NCBI Taxonomy" id="28449"/>
    <lineage>
        <taxon>Bacteria</taxon>
        <taxon>Pseudomonadati</taxon>
        <taxon>Pseudomonadota</taxon>
        <taxon>Betaproteobacteria</taxon>
        <taxon>Neisseriales</taxon>
        <taxon>Neisseriaceae</taxon>
        <taxon>Neisseria</taxon>
    </lineage>
</organism>